<gene>
    <name type="primary">ZNF283</name>
    <name type="ORF">QmoA-12446</name>
</gene>
<protein>
    <recommendedName>
        <fullName>Zinc finger protein 283</fullName>
    </recommendedName>
</protein>
<comment type="function">
    <text>May be involved in transcriptional regulation.</text>
</comment>
<comment type="subcellular location">
    <subcellularLocation>
        <location evidence="4">Nucleus</location>
    </subcellularLocation>
</comment>
<comment type="similarity">
    <text evidence="4">Belongs to the krueppel C2H2-type zinc-finger protein family.</text>
</comment>
<accession>Q95K52</accession>
<keyword id="KW-0238">DNA-binding</keyword>
<keyword id="KW-1017">Isopeptide bond</keyword>
<keyword id="KW-0479">Metal-binding</keyword>
<keyword id="KW-0539">Nucleus</keyword>
<keyword id="KW-1185">Reference proteome</keyword>
<keyword id="KW-0677">Repeat</keyword>
<keyword id="KW-0804">Transcription</keyword>
<keyword id="KW-0805">Transcription regulation</keyword>
<keyword id="KW-0832">Ubl conjugation</keyword>
<keyword id="KW-0862">Zinc</keyword>
<keyword id="KW-0863">Zinc-finger</keyword>
<evidence type="ECO:0000250" key="1">
    <source>
        <dbReference type="UniProtKB" id="Q8N7M2"/>
    </source>
</evidence>
<evidence type="ECO:0000255" key="2">
    <source>
        <dbReference type="PROSITE-ProRule" id="PRU00042"/>
    </source>
</evidence>
<evidence type="ECO:0000255" key="3">
    <source>
        <dbReference type="PROSITE-ProRule" id="PRU00119"/>
    </source>
</evidence>
<evidence type="ECO:0000305" key="4"/>
<reference key="1">
    <citation type="journal article" date="2002" name="Genome Biol.">
        <title>Prediction of unidentified human genes on the basis of sequence similarity to novel cDNAs from cynomolgus monkey brain.</title>
        <authorList>
            <person name="Osada N."/>
            <person name="Hida M."/>
            <person name="Kusuda J."/>
            <person name="Tanuma R."/>
            <person name="Hirata M."/>
            <person name="Hirai M."/>
            <person name="Terao K."/>
            <person name="Suzuki Y."/>
            <person name="Sugano S."/>
            <person name="Hashimoto K."/>
        </authorList>
    </citation>
    <scope>NUCLEOTIDE SEQUENCE [LARGE SCALE MRNA]</scope>
    <source>
        <tissue>Medulla oblongata</tissue>
    </source>
</reference>
<proteinExistence type="evidence at transcript level"/>
<dbReference type="EMBL" id="AB066540">
    <property type="protein sequence ID" value="BAB62215.1"/>
    <property type="molecule type" value="mRNA"/>
</dbReference>
<dbReference type="RefSeq" id="NP_001306570.1">
    <property type="nucleotide sequence ID" value="NM_001319641.1"/>
</dbReference>
<dbReference type="SMR" id="Q95K52"/>
<dbReference type="eggNOG" id="KOG1721">
    <property type="taxonomic scope" value="Eukaryota"/>
</dbReference>
<dbReference type="Proteomes" id="UP000233100">
    <property type="component" value="Unplaced"/>
</dbReference>
<dbReference type="GO" id="GO:0005634">
    <property type="term" value="C:nucleus"/>
    <property type="evidence" value="ECO:0007669"/>
    <property type="project" value="UniProtKB-SubCell"/>
</dbReference>
<dbReference type="GO" id="GO:0000981">
    <property type="term" value="F:DNA-binding transcription factor activity, RNA polymerase II-specific"/>
    <property type="evidence" value="ECO:0007669"/>
    <property type="project" value="TreeGrafter"/>
</dbReference>
<dbReference type="GO" id="GO:0000977">
    <property type="term" value="F:RNA polymerase II transcription regulatory region sequence-specific DNA binding"/>
    <property type="evidence" value="ECO:0007669"/>
    <property type="project" value="TreeGrafter"/>
</dbReference>
<dbReference type="GO" id="GO:0008270">
    <property type="term" value="F:zinc ion binding"/>
    <property type="evidence" value="ECO:0007669"/>
    <property type="project" value="UniProtKB-KW"/>
</dbReference>
<dbReference type="CDD" id="cd07765">
    <property type="entry name" value="KRAB_A-box"/>
    <property type="match status" value="1"/>
</dbReference>
<dbReference type="FunFam" id="3.30.160.60:FF:000020">
    <property type="entry name" value="Zinc finger protein 14 homolog"/>
    <property type="match status" value="1"/>
</dbReference>
<dbReference type="FunFam" id="3.30.160.60:FF:000053">
    <property type="entry name" value="zinc finger protein 182 isoform X1"/>
    <property type="match status" value="2"/>
</dbReference>
<dbReference type="FunFam" id="3.30.160.60:FF:001425">
    <property type="entry name" value="Zinc finger protein 331"/>
    <property type="match status" value="2"/>
</dbReference>
<dbReference type="FunFam" id="3.30.160.60:FF:002343">
    <property type="entry name" value="Zinc finger protein 33A"/>
    <property type="match status" value="2"/>
</dbReference>
<dbReference type="FunFam" id="3.30.160.60:FF:000016">
    <property type="entry name" value="zinc finger protein 37 homolog"/>
    <property type="match status" value="1"/>
</dbReference>
<dbReference type="FunFam" id="3.30.160.60:FF:000044">
    <property type="entry name" value="zinc finger protein 37 homolog"/>
    <property type="match status" value="1"/>
</dbReference>
<dbReference type="FunFam" id="3.30.160.60:FF:002090">
    <property type="entry name" value="Zinc finger protein 473"/>
    <property type="match status" value="1"/>
</dbReference>
<dbReference type="FunFam" id="3.30.160.60:FF:000238">
    <property type="entry name" value="Zinc finger protein 485"/>
    <property type="match status" value="1"/>
</dbReference>
<dbReference type="FunFam" id="3.30.160.60:FF:002254">
    <property type="entry name" value="Zinc finger protein 540"/>
    <property type="match status" value="3"/>
</dbReference>
<dbReference type="Gene3D" id="6.10.140.140">
    <property type="match status" value="1"/>
</dbReference>
<dbReference type="Gene3D" id="3.30.160.60">
    <property type="entry name" value="Classic Zinc Finger"/>
    <property type="match status" value="16"/>
</dbReference>
<dbReference type="InterPro" id="IPR001909">
    <property type="entry name" value="KRAB"/>
</dbReference>
<dbReference type="InterPro" id="IPR036051">
    <property type="entry name" value="KRAB_dom_sf"/>
</dbReference>
<dbReference type="InterPro" id="IPR036236">
    <property type="entry name" value="Znf_C2H2_sf"/>
</dbReference>
<dbReference type="InterPro" id="IPR013087">
    <property type="entry name" value="Znf_C2H2_type"/>
</dbReference>
<dbReference type="PANTHER" id="PTHR24381">
    <property type="entry name" value="ZINC FINGER PROTEIN"/>
    <property type="match status" value="1"/>
</dbReference>
<dbReference type="PANTHER" id="PTHR24381:SF435">
    <property type="entry name" value="ZINC FINGER PROTEIN 59"/>
    <property type="match status" value="1"/>
</dbReference>
<dbReference type="Pfam" id="PF01352">
    <property type="entry name" value="KRAB"/>
    <property type="match status" value="1"/>
</dbReference>
<dbReference type="Pfam" id="PF00096">
    <property type="entry name" value="zf-C2H2"/>
    <property type="match status" value="11"/>
</dbReference>
<dbReference type="Pfam" id="PF13912">
    <property type="entry name" value="zf-C2H2_6"/>
    <property type="match status" value="1"/>
</dbReference>
<dbReference type="SMART" id="SM00349">
    <property type="entry name" value="KRAB"/>
    <property type="match status" value="1"/>
</dbReference>
<dbReference type="SMART" id="SM00355">
    <property type="entry name" value="ZnF_C2H2"/>
    <property type="match status" value="14"/>
</dbReference>
<dbReference type="SUPFAM" id="SSF57667">
    <property type="entry name" value="beta-beta-alpha zinc fingers"/>
    <property type="match status" value="9"/>
</dbReference>
<dbReference type="SUPFAM" id="SSF109640">
    <property type="entry name" value="KRAB domain (Kruppel-associated box)"/>
    <property type="match status" value="1"/>
</dbReference>
<dbReference type="PROSITE" id="PS50805">
    <property type="entry name" value="KRAB"/>
    <property type="match status" value="1"/>
</dbReference>
<dbReference type="PROSITE" id="PS00028">
    <property type="entry name" value="ZINC_FINGER_C2H2_1"/>
    <property type="match status" value="14"/>
</dbReference>
<dbReference type="PROSITE" id="PS50157">
    <property type="entry name" value="ZINC_FINGER_C2H2_2"/>
    <property type="match status" value="14"/>
</dbReference>
<name>ZN283_MACFA</name>
<feature type="chain" id="PRO_0000047508" description="Zinc finger protein 283">
    <location>
        <begin position="1"/>
        <end position="654"/>
    </location>
</feature>
<feature type="domain" description="KRAB" evidence="3">
    <location>
        <begin position="49"/>
        <end position="122"/>
    </location>
</feature>
<feature type="zinc finger region" description="C2H2-type 1; degenerate" evidence="2">
    <location>
        <begin position="183"/>
        <end position="205"/>
    </location>
</feature>
<feature type="zinc finger region" description="C2H2-type 2" evidence="2">
    <location>
        <begin position="211"/>
        <end position="233"/>
    </location>
</feature>
<feature type="zinc finger region" description="C2H2-type 3" evidence="2">
    <location>
        <begin position="239"/>
        <end position="261"/>
    </location>
</feature>
<feature type="zinc finger region" description="C2H2-type 4" evidence="2">
    <location>
        <begin position="267"/>
        <end position="289"/>
    </location>
</feature>
<feature type="zinc finger region" description="C2H2-type 5" evidence="2">
    <location>
        <begin position="295"/>
        <end position="317"/>
    </location>
</feature>
<feature type="zinc finger region" description="C2H2-type 6" evidence="2">
    <location>
        <begin position="323"/>
        <end position="345"/>
    </location>
</feature>
<feature type="zinc finger region" description="C2H2-type 7" evidence="2">
    <location>
        <begin position="351"/>
        <end position="373"/>
    </location>
</feature>
<feature type="zinc finger region" description="C2H2-type 8" evidence="2">
    <location>
        <begin position="379"/>
        <end position="401"/>
    </location>
</feature>
<feature type="zinc finger region" description="C2H2-type 9" evidence="2">
    <location>
        <begin position="407"/>
        <end position="429"/>
    </location>
</feature>
<feature type="zinc finger region" description="C2H2-type 10" evidence="2">
    <location>
        <begin position="435"/>
        <end position="457"/>
    </location>
</feature>
<feature type="zinc finger region" description="C2H2-type 11" evidence="2">
    <location>
        <begin position="463"/>
        <end position="485"/>
    </location>
</feature>
<feature type="zinc finger region" description="C2H2-type 12" evidence="2">
    <location>
        <begin position="491"/>
        <end position="513"/>
    </location>
</feature>
<feature type="zinc finger region" description="C2H2-type 13" evidence="2">
    <location>
        <begin position="519"/>
        <end position="541"/>
    </location>
</feature>
<feature type="zinc finger region" description="C2H2-type 14" evidence="2">
    <location>
        <begin position="547"/>
        <end position="569"/>
    </location>
</feature>
<feature type="zinc finger region" description="C2H2-type 15" evidence="2">
    <location>
        <begin position="575"/>
        <end position="597"/>
    </location>
</feature>
<feature type="cross-link" description="Glycyl lysine isopeptide (Lys-Gly) (interchain with G-Cter in SUMO2)" evidence="1">
    <location>
        <position position="256"/>
    </location>
</feature>
<feature type="cross-link" description="Glycyl lysine isopeptide (Lys-Gly) (interchain with G-Cter in SUMO2)" evidence="1">
    <location>
        <position position="452"/>
    </location>
</feature>
<feature type="cross-link" description="Glycyl lysine isopeptide (Lys-Gly) (interchain with G-Cter in SUMO2)" evidence="1">
    <location>
        <position position="564"/>
    </location>
</feature>
<sequence>MGSLRHAWFNTSFSFPSSGFSGFCASPIEESHGALISSCNSRTMTDGLVTFRDVAIDFSQEEWECLDPAQRDLYVDVMLENYSNLVSLDLESTTYETKKIFSEKDIFEINFSQWEMKEKSKTLGLEASIFRNNWKCKSIFKGLKGCQEGYFSQMIISYEEIPSYRKSKSLTPHQSIHNTEKPYVYKERVNACSHGSKLVQHKRTHTAEKHFECKECGKNYLSAYQLNVHQRFHTGEKPYECKECGKTFSWGSSLVKHERIHTGEKPYECKECGKAFSRGYHLTQHQKIHIGVKSYKCKECGKAFFWGSSLAKHEIIHTGEKPYQCKECGKAFSRGYQLTQHQKIHTGKKPYECKICGKAFCWGYQLTRHQIFHTGEKPYECKECGKAFNCGSSLIQHARIHTGEKPYECKECGKAFSRGYHLSQHQKIHTGEKPFECKECGKAFSWGSSLVKHERVHTGEKSHECKECGKNFCSGYQLTRHQVFHTGEKPYECKECGKAFNCGSSLVQHERIHTGEKPYECKECGKAFSRGYHLTQHQKIHTGEKPFKCKECGKAFSWGSSLIKHERVHTNEKTYGCKDCGKAFGSGYQLSVHQRFHTGEKLYQCKEFGKTFTHGSKLVHERTCNDKPYKYKECGEAFLWTTYSNEKIDTDETL</sequence>
<organism>
    <name type="scientific">Macaca fascicularis</name>
    <name type="common">Crab-eating macaque</name>
    <name type="synonym">Cynomolgus monkey</name>
    <dbReference type="NCBI Taxonomy" id="9541"/>
    <lineage>
        <taxon>Eukaryota</taxon>
        <taxon>Metazoa</taxon>
        <taxon>Chordata</taxon>
        <taxon>Craniata</taxon>
        <taxon>Vertebrata</taxon>
        <taxon>Euteleostomi</taxon>
        <taxon>Mammalia</taxon>
        <taxon>Eutheria</taxon>
        <taxon>Euarchontoglires</taxon>
        <taxon>Primates</taxon>
        <taxon>Haplorrhini</taxon>
        <taxon>Catarrhini</taxon>
        <taxon>Cercopithecidae</taxon>
        <taxon>Cercopithecinae</taxon>
        <taxon>Macaca</taxon>
    </lineage>
</organism>